<evidence type="ECO:0000250" key="1"/>
<evidence type="ECO:0000250" key="2">
    <source>
        <dbReference type="UniProtKB" id="P0C1Z0"/>
    </source>
</evidence>
<evidence type="ECO:0000250" key="3">
    <source>
        <dbReference type="UniProtKB" id="P60775"/>
    </source>
</evidence>
<evidence type="ECO:0000255" key="4"/>
<evidence type="ECO:0000305" key="5"/>
<comment type="function">
    <text evidence="3">Binds to muscle nicotinic acetylcholine receptor (nAChR) and inhibit acetylcholine from binding to the receptor, thereby impairing neuromuscular transmission.</text>
</comment>
<comment type="subcellular location">
    <subcellularLocation>
        <location evidence="1">Secreted</location>
    </subcellularLocation>
</comment>
<comment type="tissue specificity">
    <text evidence="5">Expressed by the venom gland.</text>
</comment>
<comment type="similarity">
    <text evidence="5">Belongs to the three-finger toxin family. Short-chain subfamily. Type I alpha-neurotoxin sub-subfamily.</text>
</comment>
<name>3S1C_LATCO</name>
<dbReference type="EMBL" id="AB017947">
    <property type="protein sequence ID" value="BAA75767.1"/>
    <property type="molecule type" value="mRNA"/>
</dbReference>
<dbReference type="EMBL" id="AB017948">
    <property type="protein sequence ID" value="BAA75768.1"/>
    <property type="molecule type" value="mRNA"/>
</dbReference>
<dbReference type="EMBL" id="AB017949">
    <property type="protein sequence ID" value="BAA75769.1"/>
    <property type="molecule type" value="mRNA"/>
</dbReference>
<dbReference type="EMBL" id="AB017950">
    <property type="protein sequence ID" value="BAA75770.1"/>
    <property type="molecule type" value="mRNA"/>
</dbReference>
<dbReference type="EMBL" id="AB017951">
    <property type="protein sequence ID" value="BAA75771.1"/>
    <property type="molecule type" value="mRNA"/>
</dbReference>
<dbReference type="EMBL" id="AB017952">
    <property type="protein sequence ID" value="BAA75772.1"/>
    <property type="molecule type" value="mRNA"/>
</dbReference>
<dbReference type="EMBL" id="AB017953">
    <property type="protein sequence ID" value="BAA75773.1"/>
    <property type="molecule type" value="mRNA"/>
</dbReference>
<dbReference type="EMBL" id="AB017954">
    <property type="protein sequence ID" value="BAA75774.1"/>
    <property type="molecule type" value="mRNA"/>
</dbReference>
<dbReference type="PIR" id="C25866">
    <property type="entry name" value="C25866"/>
</dbReference>
<dbReference type="SMR" id="P10455"/>
<dbReference type="GO" id="GO:0005576">
    <property type="term" value="C:extracellular region"/>
    <property type="evidence" value="ECO:0007669"/>
    <property type="project" value="UniProtKB-SubCell"/>
</dbReference>
<dbReference type="GO" id="GO:0030550">
    <property type="term" value="F:acetylcholine receptor inhibitor activity"/>
    <property type="evidence" value="ECO:0007669"/>
    <property type="project" value="UniProtKB-KW"/>
</dbReference>
<dbReference type="GO" id="GO:0099106">
    <property type="term" value="F:ion channel regulator activity"/>
    <property type="evidence" value="ECO:0007669"/>
    <property type="project" value="UniProtKB-KW"/>
</dbReference>
<dbReference type="GO" id="GO:0090729">
    <property type="term" value="F:toxin activity"/>
    <property type="evidence" value="ECO:0007669"/>
    <property type="project" value="UniProtKB-KW"/>
</dbReference>
<dbReference type="CDD" id="cd00206">
    <property type="entry name" value="TFP_snake_toxin"/>
    <property type="match status" value="1"/>
</dbReference>
<dbReference type="FunFam" id="2.10.60.10:FF:000024">
    <property type="entry name" value="Cytotoxin 1"/>
    <property type="match status" value="1"/>
</dbReference>
<dbReference type="Gene3D" id="2.10.60.10">
    <property type="entry name" value="CD59"/>
    <property type="match status" value="1"/>
</dbReference>
<dbReference type="InterPro" id="IPR003571">
    <property type="entry name" value="Snake_3FTx"/>
</dbReference>
<dbReference type="InterPro" id="IPR045860">
    <property type="entry name" value="Snake_toxin-like_sf"/>
</dbReference>
<dbReference type="InterPro" id="IPR018354">
    <property type="entry name" value="Snake_toxin_con_site"/>
</dbReference>
<dbReference type="InterPro" id="IPR054131">
    <property type="entry name" value="Toxin_cobra-type"/>
</dbReference>
<dbReference type="Pfam" id="PF21947">
    <property type="entry name" value="Toxin_cobra-type"/>
    <property type="match status" value="1"/>
</dbReference>
<dbReference type="SUPFAM" id="SSF57302">
    <property type="entry name" value="Snake toxin-like"/>
    <property type="match status" value="1"/>
</dbReference>
<dbReference type="PROSITE" id="PS00272">
    <property type="entry name" value="SNAKE_TOXIN"/>
    <property type="match status" value="1"/>
</dbReference>
<organism>
    <name type="scientific">Laticauda colubrina</name>
    <name type="common">Yellow-lipped sea krait</name>
    <name type="synonym">Banded sea krait</name>
    <dbReference type="NCBI Taxonomy" id="8628"/>
    <lineage>
        <taxon>Eukaryota</taxon>
        <taxon>Metazoa</taxon>
        <taxon>Chordata</taxon>
        <taxon>Craniata</taxon>
        <taxon>Vertebrata</taxon>
        <taxon>Euteleostomi</taxon>
        <taxon>Lepidosauria</taxon>
        <taxon>Squamata</taxon>
        <taxon>Bifurcata</taxon>
        <taxon>Unidentata</taxon>
        <taxon>Episquamata</taxon>
        <taxon>Toxicofera</taxon>
        <taxon>Serpentes</taxon>
        <taxon>Colubroidea</taxon>
        <taxon>Elapidae</taxon>
        <taxon>Laticaudinae</taxon>
        <taxon>Laticauda</taxon>
    </lineage>
</organism>
<accession>P10455</accession>
<accession>Q9PRJ5</accession>
<accession>Q9PWJ4</accession>
<protein>
    <recommendedName>
        <fullName>Short neurotoxin C</fullName>
    </recommendedName>
</protein>
<sequence length="83" mass="9387">MKTLLLTLVVVTMVCLDLAYTRRCYNQQSSQPKTTKSCPPGENSCYNKQWRDHRGSITERGCGCPKVKPGIKLRCCESEDCNN</sequence>
<keyword id="KW-0008">Acetylcholine receptor inhibiting toxin</keyword>
<keyword id="KW-1015">Disulfide bond</keyword>
<keyword id="KW-0872">Ion channel impairing toxin</keyword>
<keyword id="KW-0528">Neurotoxin</keyword>
<keyword id="KW-0629">Postsynaptic neurotoxin</keyword>
<keyword id="KW-0964">Secreted</keyword>
<keyword id="KW-0732">Signal</keyword>
<keyword id="KW-0800">Toxin</keyword>
<reference key="1">
    <citation type="submission" date="1998-09" db="EMBL/GenBank/DDBJ databases">
        <title>Classification of sea snakes in genus Laticauda by nucleotide sequences encoding short chain neurotoxins.</title>
        <authorList>
            <person name="Kariya Y."/>
            <person name="Araki S."/>
            <person name="Agu H."/>
            <person name="Tamiya T."/>
            <person name="Tsuchiya T."/>
        </authorList>
    </citation>
    <scope>NUCLEOTIDE SEQUENCE [MRNA]</scope>
    <source>
        <tissue>Venom gland</tissue>
    </source>
</reference>
<reference key="2">
    <citation type="journal article" date="1983" name="Toxicon 21 Suppl.">
        <title>Neurotoxins of sea snakes genus Laticauda.</title>
        <authorList>
            <person name="Tamiya N."/>
            <person name="Sato A."/>
            <person name="Kim H.S."/>
            <person name="Teruuchi T."/>
            <person name="Takasaki C."/>
            <person name="Ishikawa Y."/>
            <person name="Guinea M.L."/>
            <person name="McCoy M."/>
            <person name="Heatwole H."/>
            <person name="Cogger H.G."/>
        </authorList>
    </citation>
    <scope>NUCLEOTIDE SEQUENCE [MRNA] OF 22-83</scope>
    <source>
        <strain>Fiji</strain>
        <strain>Salomon Island</strain>
        <tissue>Venom</tissue>
    </source>
</reference>
<proteinExistence type="inferred from homology"/>
<feature type="signal peptide" evidence="4">
    <location>
        <begin position="1"/>
        <end position="21"/>
    </location>
</feature>
<feature type="chain" id="PRO_0000035438" description="Short neurotoxin C">
    <location>
        <begin position="22"/>
        <end position="83"/>
    </location>
</feature>
<feature type="disulfide bond" evidence="2">
    <location>
        <begin position="24"/>
        <end position="45"/>
    </location>
</feature>
<feature type="disulfide bond" evidence="2">
    <location>
        <begin position="38"/>
        <end position="62"/>
    </location>
</feature>
<feature type="disulfide bond" evidence="2">
    <location>
        <begin position="64"/>
        <end position="75"/>
    </location>
</feature>
<feature type="disulfide bond" evidence="2">
    <location>
        <begin position="76"/>
        <end position="81"/>
    </location>
</feature>
<feature type="sequence variant">
    <original>A</original>
    <variation>G</variation>
    <location>
        <position position="19"/>
    </location>
</feature>